<proteinExistence type="inferred from homology"/>
<feature type="chain" id="PRO_1000063771" description="3-isopropylmalate dehydratase small subunit">
    <location>
        <begin position="1"/>
        <end position="200"/>
    </location>
</feature>
<protein>
    <recommendedName>
        <fullName evidence="1">3-isopropylmalate dehydratase small subunit</fullName>
        <ecNumber evidence="1">4.2.1.33</ecNumber>
    </recommendedName>
    <alternativeName>
        <fullName evidence="1">Alpha-IPM isomerase</fullName>
        <shortName evidence="1">IPMI</shortName>
    </alternativeName>
    <alternativeName>
        <fullName evidence="1">Isopropylmalate isomerase</fullName>
    </alternativeName>
</protein>
<reference key="1">
    <citation type="journal article" date="2007" name="Genome Biol.">
        <title>Characterization and modeling of the Haemophilus influenzae core and supragenomes based on the complete genomic sequences of Rd and 12 clinical nontypeable strains.</title>
        <authorList>
            <person name="Hogg J.S."/>
            <person name="Hu F.Z."/>
            <person name="Janto B."/>
            <person name="Boissy R."/>
            <person name="Hayes J."/>
            <person name="Keefe R."/>
            <person name="Post J.C."/>
            <person name="Ehrlich G.D."/>
        </authorList>
    </citation>
    <scope>NUCLEOTIDE SEQUENCE [LARGE SCALE GENOMIC DNA]</scope>
    <source>
        <strain>PittEE</strain>
    </source>
</reference>
<sequence length="200" mass="22814">MAGFKQLSGLVVPLDAANVDTDAIIPKQFLQAITRVGFGKHLFHEWRYLDVDGTKPNPEFVLNYPQYQGATILLARKNLGCGSSREHAPWALADYGFKVMIAPSFADIFYNNSLNNHMLPIRLSEEEVEEIFQWVWANESKQIHVDLEAMTVTVGDKVYTFELDEFRRHCLLNGLDNIGLTLQHEDKISAYEKNIPAFLR</sequence>
<dbReference type="EC" id="4.2.1.33" evidence="1"/>
<dbReference type="EMBL" id="CP000671">
    <property type="protein sequence ID" value="ABQ98733.1"/>
    <property type="molecule type" value="Genomic_DNA"/>
</dbReference>
<dbReference type="SMR" id="A5UD82"/>
<dbReference type="KEGG" id="hip:CGSHiEE_07020"/>
<dbReference type="HOGENOM" id="CLU_081378_0_3_6"/>
<dbReference type="UniPathway" id="UPA00048">
    <property type="reaction ID" value="UER00071"/>
</dbReference>
<dbReference type="GO" id="GO:0009316">
    <property type="term" value="C:3-isopropylmalate dehydratase complex"/>
    <property type="evidence" value="ECO:0007669"/>
    <property type="project" value="InterPro"/>
</dbReference>
<dbReference type="GO" id="GO:0003861">
    <property type="term" value="F:3-isopropylmalate dehydratase activity"/>
    <property type="evidence" value="ECO:0007669"/>
    <property type="project" value="UniProtKB-UniRule"/>
</dbReference>
<dbReference type="GO" id="GO:0009098">
    <property type="term" value="P:L-leucine biosynthetic process"/>
    <property type="evidence" value="ECO:0007669"/>
    <property type="project" value="UniProtKB-UniRule"/>
</dbReference>
<dbReference type="CDD" id="cd01577">
    <property type="entry name" value="IPMI_Swivel"/>
    <property type="match status" value="1"/>
</dbReference>
<dbReference type="FunFam" id="3.20.19.10:FF:000003">
    <property type="entry name" value="3-isopropylmalate dehydratase small subunit"/>
    <property type="match status" value="1"/>
</dbReference>
<dbReference type="Gene3D" id="3.20.19.10">
    <property type="entry name" value="Aconitase, domain 4"/>
    <property type="match status" value="1"/>
</dbReference>
<dbReference type="HAMAP" id="MF_01031">
    <property type="entry name" value="LeuD_type1"/>
    <property type="match status" value="1"/>
</dbReference>
<dbReference type="InterPro" id="IPR004431">
    <property type="entry name" value="3-IsopropMal_deHydase_ssu"/>
</dbReference>
<dbReference type="InterPro" id="IPR015928">
    <property type="entry name" value="Aconitase/3IPM_dehydase_swvl"/>
</dbReference>
<dbReference type="InterPro" id="IPR000573">
    <property type="entry name" value="AconitaseA/IPMdHydase_ssu_swvl"/>
</dbReference>
<dbReference type="InterPro" id="IPR033940">
    <property type="entry name" value="IPMI_Swivel"/>
</dbReference>
<dbReference type="InterPro" id="IPR050075">
    <property type="entry name" value="LeuD"/>
</dbReference>
<dbReference type="NCBIfam" id="TIGR00171">
    <property type="entry name" value="leuD"/>
    <property type="match status" value="1"/>
</dbReference>
<dbReference type="NCBIfam" id="NF002458">
    <property type="entry name" value="PRK01641.1"/>
    <property type="match status" value="1"/>
</dbReference>
<dbReference type="PANTHER" id="PTHR43345:SF5">
    <property type="entry name" value="3-ISOPROPYLMALATE DEHYDRATASE SMALL SUBUNIT"/>
    <property type="match status" value="1"/>
</dbReference>
<dbReference type="PANTHER" id="PTHR43345">
    <property type="entry name" value="3-ISOPROPYLMALATE DEHYDRATASE SMALL SUBUNIT 2-RELATED-RELATED"/>
    <property type="match status" value="1"/>
</dbReference>
<dbReference type="Pfam" id="PF00694">
    <property type="entry name" value="Aconitase_C"/>
    <property type="match status" value="1"/>
</dbReference>
<dbReference type="SUPFAM" id="SSF52016">
    <property type="entry name" value="LeuD/IlvD-like"/>
    <property type="match status" value="1"/>
</dbReference>
<name>LEUD_HAEIE</name>
<organism>
    <name type="scientific">Haemophilus influenzae (strain PittEE)</name>
    <dbReference type="NCBI Taxonomy" id="374930"/>
    <lineage>
        <taxon>Bacteria</taxon>
        <taxon>Pseudomonadati</taxon>
        <taxon>Pseudomonadota</taxon>
        <taxon>Gammaproteobacteria</taxon>
        <taxon>Pasteurellales</taxon>
        <taxon>Pasteurellaceae</taxon>
        <taxon>Haemophilus</taxon>
    </lineage>
</organism>
<gene>
    <name evidence="1" type="primary">leuD</name>
    <name type="ordered locus">CGSHiEE_07020</name>
</gene>
<accession>A5UD82</accession>
<comment type="function">
    <text evidence="1">Catalyzes the isomerization between 2-isopropylmalate and 3-isopropylmalate, via the formation of 2-isopropylmaleate.</text>
</comment>
<comment type="catalytic activity">
    <reaction evidence="1">
        <text>(2R,3S)-3-isopropylmalate = (2S)-2-isopropylmalate</text>
        <dbReference type="Rhea" id="RHEA:32287"/>
        <dbReference type="ChEBI" id="CHEBI:1178"/>
        <dbReference type="ChEBI" id="CHEBI:35121"/>
        <dbReference type="EC" id="4.2.1.33"/>
    </reaction>
</comment>
<comment type="pathway">
    <text evidence="1">Amino-acid biosynthesis; L-leucine biosynthesis; L-leucine from 3-methyl-2-oxobutanoate: step 2/4.</text>
</comment>
<comment type="subunit">
    <text evidence="1">Heterodimer of LeuC and LeuD.</text>
</comment>
<comment type="similarity">
    <text evidence="1">Belongs to the LeuD family. LeuD type 1 subfamily.</text>
</comment>
<evidence type="ECO:0000255" key="1">
    <source>
        <dbReference type="HAMAP-Rule" id="MF_01031"/>
    </source>
</evidence>
<keyword id="KW-0028">Amino-acid biosynthesis</keyword>
<keyword id="KW-0100">Branched-chain amino acid biosynthesis</keyword>
<keyword id="KW-0432">Leucine biosynthesis</keyword>
<keyword id="KW-0456">Lyase</keyword>